<dbReference type="EMBL" id="AE005672">
    <property type="protein sequence ID" value="AAK76060.1"/>
    <property type="molecule type" value="Genomic_DNA"/>
</dbReference>
<dbReference type="PIR" id="C95233">
    <property type="entry name" value="C95233"/>
</dbReference>
<dbReference type="RefSeq" id="WP_000831905.1">
    <property type="nucleotide sequence ID" value="NZ_CP155539.1"/>
</dbReference>
<dbReference type="SMR" id="P66256"/>
<dbReference type="PaxDb" id="170187-SP_1993"/>
<dbReference type="EnsemblBacteria" id="AAK76060">
    <property type="protein sequence ID" value="AAK76060"/>
    <property type="gene ID" value="SP_1993"/>
</dbReference>
<dbReference type="GeneID" id="93738550"/>
<dbReference type="KEGG" id="spn:SP_1993"/>
<dbReference type="eggNOG" id="COG0230">
    <property type="taxonomic scope" value="Bacteria"/>
</dbReference>
<dbReference type="PhylomeDB" id="P66256"/>
<dbReference type="BioCyc" id="SPNE170187:G1FZB-2049-MONOMER"/>
<dbReference type="Proteomes" id="UP000000585">
    <property type="component" value="Chromosome"/>
</dbReference>
<dbReference type="GO" id="GO:1990904">
    <property type="term" value="C:ribonucleoprotein complex"/>
    <property type="evidence" value="ECO:0007669"/>
    <property type="project" value="UniProtKB-KW"/>
</dbReference>
<dbReference type="GO" id="GO:0005840">
    <property type="term" value="C:ribosome"/>
    <property type="evidence" value="ECO:0007669"/>
    <property type="project" value="UniProtKB-KW"/>
</dbReference>
<dbReference type="GO" id="GO:0003735">
    <property type="term" value="F:structural constituent of ribosome"/>
    <property type="evidence" value="ECO:0007669"/>
    <property type="project" value="InterPro"/>
</dbReference>
<dbReference type="GO" id="GO:0006412">
    <property type="term" value="P:translation"/>
    <property type="evidence" value="ECO:0007669"/>
    <property type="project" value="UniProtKB-UniRule"/>
</dbReference>
<dbReference type="FunFam" id="1.10.287.3980:FF:000001">
    <property type="entry name" value="Mitochondrial ribosomal protein L34"/>
    <property type="match status" value="1"/>
</dbReference>
<dbReference type="Gene3D" id="1.10.287.3980">
    <property type="match status" value="1"/>
</dbReference>
<dbReference type="HAMAP" id="MF_00391">
    <property type="entry name" value="Ribosomal_bL34"/>
    <property type="match status" value="1"/>
</dbReference>
<dbReference type="InterPro" id="IPR000271">
    <property type="entry name" value="Ribosomal_bL34"/>
</dbReference>
<dbReference type="InterPro" id="IPR020939">
    <property type="entry name" value="Ribosomal_bL34_CS"/>
</dbReference>
<dbReference type="NCBIfam" id="TIGR01030">
    <property type="entry name" value="rpmH_bact"/>
    <property type="match status" value="1"/>
</dbReference>
<dbReference type="PANTHER" id="PTHR14503:SF4">
    <property type="entry name" value="LARGE RIBOSOMAL SUBUNIT PROTEIN BL34M"/>
    <property type="match status" value="1"/>
</dbReference>
<dbReference type="PANTHER" id="PTHR14503">
    <property type="entry name" value="MITOCHONDRIAL RIBOSOMAL PROTEIN 34 FAMILY MEMBER"/>
    <property type="match status" value="1"/>
</dbReference>
<dbReference type="Pfam" id="PF00468">
    <property type="entry name" value="Ribosomal_L34"/>
    <property type="match status" value="1"/>
</dbReference>
<dbReference type="PROSITE" id="PS00784">
    <property type="entry name" value="RIBOSOMAL_L34"/>
    <property type="match status" value="1"/>
</dbReference>
<comment type="similarity">
    <text evidence="1">Belongs to the bacterial ribosomal protein bL34 family.</text>
</comment>
<keyword id="KW-1185">Reference proteome</keyword>
<keyword id="KW-0687">Ribonucleoprotein</keyword>
<keyword id="KW-0689">Ribosomal protein</keyword>
<gene>
    <name evidence="1" type="primary">rpmH</name>
    <name type="ordered locus">SP_1993</name>
</gene>
<proteinExistence type="inferred from homology"/>
<name>RL34_STRPN</name>
<organism>
    <name type="scientific">Streptococcus pneumoniae serotype 4 (strain ATCC BAA-334 / TIGR4)</name>
    <dbReference type="NCBI Taxonomy" id="170187"/>
    <lineage>
        <taxon>Bacteria</taxon>
        <taxon>Bacillati</taxon>
        <taxon>Bacillota</taxon>
        <taxon>Bacilli</taxon>
        <taxon>Lactobacillales</taxon>
        <taxon>Streptococcaceae</taxon>
        <taxon>Streptococcus</taxon>
    </lineage>
</organism>
<sequence>MKRTYQPSKLRRARKHGFRNRMSTKNGRRVLAARRRKGRKVLAA</sequence>
<reference key="1">
    <citation type="journal article" date="2001" name="Science">
        <title>Complete genome sequence of a virulent isolate of Streptococcus pneumoniae.</title>
        <authorList>
            <person name="Tettelin H."/>
            <person name="Nelson K.E."/>
            <person name="Paulsen I.T."/>
            <person name="Eisen J.A."/>
            <person name="Read T.D."/>
            <person name="Peterson S.N."/>
            <person name="Heidelberg J.F."/>
            <person name="DeBoy R.T."/>
            <person name="Haft D.H."/>
            <person name="Dodson R.J."/>
            <person name="Durkin A.S."/>
            <person name="Gwinn M.L."/>
            <person name="Kolonay J.F."/>
            <person name="Nelson W.C."/>
            <person name="Peterson J.D."/>
            <person name="Umayam L.A."/>
            <person name="White O."/>
            <person name="Salzberg S.L."/>
            <person name="Lewis M.R."/>
            <person name="Radune D."/>
            <person name="Holtzapple E.K."/>
            <person name="Khouri H.M."/>
            <person name="Wolf A.M."/>
            <person name="Utterback T.R."/>
            <person name="Hansen C.L."/>
            <person name="McDonald L.A."/>
            <person name="Feldblyum T.V."/>
            <person name="Angiuoli S.V."/>
            <person name="Dickinson T."/>
            <person name="Hickey E.K."/>
            <person name="Holt I.E."/>
            <person name="Loftus B.J."/>
            <person name="Yang F."/>
            <person name="Smith H.O."/>
            <person name="Venter J.C."/>
            <person name="Dougherty B.A."/>
            <person name="Morrison D.A."/>
            <person name="Hollingshead S.K."/>
            <person name="Fraser C.M."/>
        </authorList>
    </citation>
    <scope>NUCLEOTIDE SEQUENCE [LARGE SCALE GENOMIC DNA]</scope>
    <source>
        <strain>ATCC BAA-334 / TIGR4</strain>
    </source>
</reference>
<accession>P66256</accession>
<accession>Q97NM7</accession>
<evidence type="ECO:0000255" key="1">
    <source>
        <dbReference type="HAMAP-Rule" id="MF_00391"/>
    </source>
</evidence>
<evidence type="ECO:0000256" key="2">
    <source>
        <dbReference type="SAM" id="MobiDB-lite"/>
    </source>
</evidence>
<evidence type="ECO:0000305" key="3"/>
<protein>
    <recommendedName>
        <fullName evidence="1">Large ribosomal subunit protein bL34</fullName>
    </recommendedName>
    <alternativeName>
        <fullName evidence="3">50S ribosomal protein L34</fullName>
    </alternativeName>
</protein>
<feature type="chain" id="PRO_0000187474" description="Large ribosomal subunit protein bL34">
    <location>
        <begin position="1"/>
        <end position="44"/>
    </location>
</feature>
<feature type="region of interest" description="Disordered" evidence="2">
    <location>
        <begin position="1"/>
        <end position="44"/>
    </location>
</feature>
<feature type="compositionally biased region" description="Basic residues" evidence="2">
    <location>
        <begin position="1"/>
        <end position="19"/>
    </location>
</feature>
<feature type="compositionally biased region" description="Basic residues" evidence="2">
    <location>
        <begin position="26"/>
        <end position="44"/>
    </location>
</feature>